<proteinExistence type="inferred from homology"/>
<organism>
    <name type="scientific">Aliivibrio fischeri (strain MJ11)</name>
    <name type="common">Vibrio fischeri</name>
    <dbReference type="NCBI Taxonomy" id="388396"/>
    <lineage>
        <taxon>Bacteria</taxon>
        <taxon>Pseudomonadati</taxon>
        <taxon>Pseudomonadota</taxon>
        <taxon>Gammaproteobacteria</taxon>
        <taxon>Vibrionales</taxon>
        <taxon>Vibrionaceae</taxon>
        <taxon>Aliivibrio</taxon>
    </lineage>
</organism>
<protein>
    <recommendedName>
        <fullName evidence="1">Protein nucleotidyltransferase YdiU</fullName>
        <ecNumber evidence="1">2.7.7.-</ecNumber>
    </recommendedName>
    <alternativeName>
        <fullName evidence="1">Protein adenylyltransferase YdiU</fullName>
        <ecNumber evidence="1">2.7.7.108</ecNumber>
    </alternativeName>
    <alternativeName>
        <fullName evidence="1">Protein uridylyltransferase YdiU</fullName>
        <ecNumber evidence="1">2.7.7.-</ecNumber>
    </alternativeName>
</protein>
<accession>B5FG68</accession>
<comment type="function">
    <text evidence="1">Nucleotidyltransferase involved in the post-translational modification of proteins. It can catalyze the addition of adenosine monophosphate (AMP) or uridine monophosphate (UMP) to a protein, resulting in modifications known as AMPylation and UMPylation.</text>
</comment>
<comment type="catalytic activity">
    <reaction evidence="1">
        <text>L-seryl-[protein] + ATP = 3-O-(5'-adenylyl)-L-seryl-[protein] + diphosphate</text>
        <dbReference type="Rhea" id="RHEA:58120"/>
        <dbReference type="Rhea" id="RHEA-COMP:9863"/>
        <dbReference type="Rhea" id="RHEA-COMP:15073"/>
        <dbReference type="ChEBI" id="CHEBI:29999"/>
        <dbReference type="ChEBI" id="CHEBI:30616"/>
        <dbReference type="ChEBI" id="CHEBI:33019"/>
        <dbReference type="ChEBI" id="CHEBI:142516"/>
        <dbReference type="EC" id="2.7.7.108"/>
    </reaction>
</comment>
<comment type="catalytic activity">
    <reaction evidence="1">
        <text>L-threonyl-[protein] + ATP = 3-O-(5'-adenylyl)-L-threonyl-[protein] + diphosphate</text>
        <dbReference type="Rhea" id="RHEA:54292"/>
        <dbReference type="Rhea" id="RHEA-COMP:11060"/>
        <dbReference type="Rhea" id="RHEA-COMP:13847"/>
        <dbReference type="ChEBI" id="CHEBI:30013"/>
        <dbReference type="ChEBI" id="CHEBI:30616"/>
        <dbReference type="ChEBI" id="CHEBI:33019"/>
        <dbReference type="ChEBI" id="CHEBI:138113"/>
        <dbReference type="EC" id="2.7.7.108"/>
    </reaction>
</comment>
<comment type="catalytic activity">
    <reaction evidence="1">
        <text>L-tyrosyl-[protein] + ATP = O-(5'-adenylyl)-L-tyrosyl-[protein] + diphosphate</text>
        <dbReference type="Rhea" id="RHEA:54288"/>
        <dbReference type="Rhea" id="RHEA-COMP:10136"/>
        <dbReference type="Rhea" id="RHEA-COMP:13846"/>
        <dbReference type="ChEBI" id="CHEBI:30616"/>
        <dbReference type="ChEBI" id="CHEBI:33019"/>
        <dbReference type="ChEBI" id="CHEBI:46858"/>
        <dbReference type="ChEBI" id="CHEBI:83624"/>
        <dbReference type="EC" id="2.7.7.108"/>
    </reaction>
</comment>
<comment type="catalytic activity">
    <reaction evidence="1">
        <text>L-histidyl-[protein] + UTP = N(tele)-(5'-uridylyl)-L-histidyl-[protein] + diphosphate</text>
        <dbReference type="Rhea" id="RHEA:83891"/>
        <dbReference type="Rhea" id="RHEA-COMP:9745"/>
        <dbReference type="Rhea" id="RHEA-COMP:20239"/>
        <dbReference type="ChEBI" id="CHEBI:29979"/>
        <dbReference type="ChEBI" id="CHEBI:33019"/>
        <dbReference type="ChEBI" id="CHEBI:46398"/>
        <dbReference type="ChEBI" id="CHEBI:233474"/>
    </reaction>
</comment>
<comment type="catalytic activity">
    <reaction evidence="1">
        <text>L-seryl-[protein] + UTP = O-(5'-uridylyl)-L-seryl-[protein] + diphosphate</text>
        <dbReference type="Rhea" id="RHEA:64604"/>
        <dbReference type="Rhea" id="RHEA-COMP:9863"/>
        <dbReference type="Rhea" id="RHEA-COMP:16635"/>
        <dbReference type="ChEBI" id="CHEBI:29999"/>
        <dbReference type="ChEBI" id="CHEBI:33019"/>
        <dbReference type="ChEBI" id="CHEBI:46398"/>
        <dbReference type="ChEBI" id="CHEBI:156051"/>
    </reaction>
</comment>
<comment type="catalytic activity">
    <reaction evidence="1">
        <text>L-tyrosyl-[protein] + UTP = O-(5'-uridylyl)-L-tyrosyl-[protein] + diphosphate</text>
        <dbReference type="Rhea" id="RHEA:83887"/>
        <dbReference type="Rhea" id="RHEA-COMP:10136"/>
        <dbReference type="Rhea" id="RHEA-COMP:20238"/>
        <dbReference type="ChEBI" id="CHEBI:33019"/>
        <dbReference type="ChEBI" id="CHEBI:46398"/>
        <dbReference type="ChEBI" id="CHEBI:46858"/>
        <dbReference type="ChEBI" id="CHEBI:90602"/>
    </reaction>
</comment>
<comment type="cofactor">
    <cofactor evidence="1">
        <name>Mg(2+)</name>
        <dbReference type="ChEBI" id="CHEBI:18420"/>
    </cofactor>
    <cofactor evidence="1">
        <name>Mn(2+)</name>
        <dbReference type="ChEBI" id="CHEBI:29035"/>
    </cofactor>
</comment>
<comment type="similarity">
    <text evidence="1">Belongs to the SELO family.</text>
</comment>
<sequence>MSFWNSLSITTRYSRLPRCFFTYVQPTPLDNSRWLIWNSELAKQFDLPENVHNHSELLDAFSGEVVPSVFAPLAMKYAGHQFGSYNPDLGDGRGLLLAEIKDKKGNSFDLHLKGAGLTPYSRSGDGRAVLRSTIREYLCSEAMAGLGIPTTRALGMMTSDTPVFREGYETGALLIRMAETHIRFGHFEHLFYSNLLEELKLLSDKVIEWHFPCCLGEDKPYLAMFNNIVDRTAYMIAQWQAVGFAHGVMNTDNMSIIGQTFDYGPFGFLDDYEPGYICNHSDYQGRYAFNQQPRIGLWNLSALAHSLSPLIDKSDLEKALEQYEIKLHDYFSQLMRKKLGLLSKQEGDTRLFESMFELLSQNTVDYTRFMRVLSDLDSQDKQTVIDLFVDREAATLWVDLYLTRCKLEADSFDMRCSKMRKVNPKYVLRNYLAQQAIVKANEGDFSDVKILSTLLASPFDEHPDFERYAELPPEWGKRMEISCSS</sequence>
<reference key="1">
    <citation type="submission" date="2008-08" db="EMBL/GenBank/DDBJ databases">
        <title>Complete sequence of Vibrio fischeri strain MJ11.</title>
        <authorList>
            <person name="Mandel M.J."/>
            <person name="Stabb E.V."/>
            <person name="Ruby E.G."/>
            <person name="Ferriera S."/>
            <person name="Johnson J."/>
            <person name="Kravitz S."/>
            <person name="Beeson K."/>
            <person name="Sutton G."/>
            <person name="Rogers Y.-H."/>
            <person name="Friedman R."/>
            <person name="Frazier M."/>
            <person name="Venter J.C."/>
        </authorList>
    </citation>
    <scope>NUCLEOTIDE SEQUENCE [LARGE SCALE GENOMIC DNA]</scope>
    <source>
        <strain>MJ11</strain>
    </source>
</reference>
<gene>
    <name evidence="1" type="primary">ydiU</name>
    <name evidence="1" type="synonym">selO</name>
    <name type="ordered locus">VFMJ11_1896</name>
</gene>
<dbReference type="EC" id="2.7.7.-" evidence="1"/>
<dbReference type="EC" id="2.7.7.108" evidence="1"/>
<dbReference type="EMBL" id="CP001139">
    <property type="protein sequence ID" value="ACH65586.1"/>
    <property type="molecule type" value="Genomic_DNA"/>
</dbReference>
<dbReference type="RefSeq" id="WP_012533155.1">
    <property type="nucleotide sequence ID" value="NC_011184.1"/>
</dbReference>
<dbReference type="SMR" id="B5FG68"/>
<dbReference type="KEGG" id="vfm:VFMJ11_1896"/>
<dbReference type="HOGENOM" id="CLU_010245_4_0_6"/>
<dbReference type="Proteomes" id="UP000001857">
    <property type="component" value="Chromosome I"/>
</dbReference>
<dbReference type="GO" id="GO:0070733">
    <property type="term" value="F:AMPylase activity"/>
    <property type="evidence" value="ECO:0007669"/>
    <property type="project" value="TreeGrafter"/>
</dbReference>
<dbReference type="GO" id="GO:0005524">
    <property type="term" value="F:ATP binding"/>
    <property type="evidence" value="ECO:0007669"/>
    <property type="project" value="UniProtKB-UniRule"/>
</dbReference>
<dbReference type="GO" id="GO:0000287">
    <property type="term" value="F:magnesium ion binding"/>
    <property type="evidence" value="ECO:0007669"/>
    <property type="project" value="UniProtKB-UniRule"/>
</dbReference>
<dbReference type="HAMAP" id="MF_00692">
    <property type="entry name" value="YdiU_SelO"/>
    <property type="match status" value="1"/>
</dbReference>
<dbReference type="InterPro" id="IPR003846">
    <property type="entry name" value="SelO"/>
</dbReference>
<dbReference type="NCBIfam" id="NF000658">
    <property type="entry name" value="PRK00029.1"/>
    <property type="match status" value="1"/>
</dbReference>
<dbReference type="PANTHER" id="PTHR32057">
    <property type="entry name" value="PROTEIN ADENYLYLTRANSFERASE SELO, MITOCHONDRIAL"/>
    <property type="match status" value="1"/>
</dbReference>
<dbReference type="PANTHER" id="PTHR32057:SF14">
    <property type="entry name" value="PROTEIN ADENYLYLTRANSFERASE SELO, MITOCHONDRIAL"/>
    <property type="match status" value="1"/>
</dbReference>
<dbReference type="Pfam" id="PF02696">
    <property type="entry name" value="SelO"/>
    <property type="match status" value="1"/>
</dbReference>
<keyword id="KW-0067">ATP-binding</keyword>
<keyword id="KW-0460">Magnesium</keyword>
<keyword id="KW-0464">Manganese</keyword>
<keyword id="KW-0479">Metal-binding</keyword>
<keyword id="KW-0547">Nucleotide-binding</keyword>
<keyword id="KW-0548">Nucleotidyltransferase</keyword>
<keyword id="KW-0808">Transferase</keyword>
<evidence type="ECO:0000255" key="1">
    <source>
        <dbReference type="HAMAP-Rule" id="MF_00692"/>
    </source>
</evidence>
<feature type="chain" id="PRO_1000132130" description="Protein nucleotidyltransferase YdiU">
    <location>
        <begin position="1"/>
        <end position="485"/>
    </location>
</feature>
<feature type="active site" description="Proton acceptor" evidence="1">
    <location>
        <position position="252"/>
    </location>
</feature>
<feature type="binding site" evidence="1">
    <location>
        <position position="90"/>
    </location>
    <ligand>
        <name>ATP</name>
        <dbReference type="ChEBI" id="CHEBI:30616"/>
    </ligand>
</feature>
<feature type="binding site" evidence="1">
    <location>
        <position position="92"/>
    </location>
    <ligand>
        <name>ATP</name>
        <dbReference type="ChEBI" id="CHEBI:30616"/>
    </ligand>
</feature>
<feature type="binding site" evidence="1">
    <location>
        <position position="93"/>
    </location>
    <ligand>
        <name>ATP</name>
        <dbReference type="ChEBI" id="CHEBI:30616"/>
    </ligand>
</feature>
<feature type="binding site" evidence="1">
    <location>
        <position position="113"/>
    </location>
    <ligand>
        <name>ATP</name>
        <dbReference type="ChEBI" id="CHEBI:30616"/>
    </ligand>
</feature>
<feature type="binding site" evidence="1">
    <location>
        <position position="125"/>
    </location>
    <ligand>
        <name>ATP</name>
        <dbReference type="ChEBI" id="CHEBI:30616"/>
    </ligand>
</feature>
<feature type="binding site" evidence="1">
    <location>
        <position position="126"/>
    </location>
    <ligand>
        <name>ATP</name>
        <dbReference type="ChEBI" id="CHEBI:30616"/>
    </ligand>
</feature>
<feature type="binding site" evidence="1">
    <location>
        <position position="176"/>
    </location>
    <ligand>
        <name>ATP</name>
        <dbReference type="ChEBI" id="CHEBI:30616"/>
    </ligand>
</feature>
<feature type="binding site" evidence="1">
    <location>
        <position position="183"/>
    </location>
    <ligand>
        <name>ATP</name>
        <dbReference type="ChEBI" id="CHEBI:30616"/>
    </ligand>
</feature>
<feature type="binding site" evidence="1">
    <location>
        <position position="253"/>
    </location>
    <ligand>
        <name>Mg(2+)</name>
        <dbReference type="ChEBI" id="CHEBI:18420"/>
    </ligand>
</feature>
<feature type="binding site" evidence="1">
    <location>
        <position position="262"/>
    </location>
    <ligand>
        <name>ATP</name>
        <dbReference type="ChEBI" id="CHEBI:30616"/>
    </ligand>
</feature>
<feature type="binding site" evidence="1">
    <location>
        <position position="262"/>
    </location>
    <ligand>
        <name>Mg(2+)</name>
        <dbReference type="ChEBI" id="CHEBI:18420"/>
    </ligand>
</feature>
<name>SELO_ALIFM</name>